<evidence type="ECO:0000255" key="1">
    <source>
        <dbReference type="HAMAP-Rule" id="MF_00156"/>
    </source>
</evidence>
<gene>
    <name evidence="1" type="primary">panB</name>
    <name type="ordered locus">Cpar_0815</name>
</gene>
<dbReference type="EC" id="2.1.2.11" evidence="1"/>
<dbReference type="EMBL" id="CP001099">
    <property type="protein sequence ID" value="ACF11231.1"/>
    <property type="molecule type" value="Genomic_DNA"/>
</dbReference>
<dbReference type="RefSeq" id="WP_012502064.1">
    <property type="nucleotide sequence ID" value="NC_011027.1"/>
</dbReference>
<dbReference type="SMR" id="B3QMS8"/>
<dbReference type="STRING" id="517417.Cpar_0815"/>
<dbReference type="KEGG" id="cpc:Cpar_0815"/>
<dbReference type="eggNOG" id="COG0413">
    <property type="taxonomic scope" value="Bacteria"/>
</dbReference>
<dbReference type="HOGENOM" id="CLU_036645_1_0_10"/>
<dbReference type="OrthoDB" id="9781789at2"/>
<dbReference type="UniPathway" id="UPA00028">
    <property type="reaction ID" value="UER00003"/>
</dbReference>
<dbReference type="Proteomes" id="UP000008811">
    <property type="component" value="Chromosome"/>
</dbReference>
<dbReference type="GO" id="GO:0005737">
    <property type="term" value="C:cytoplasm"/>
    <property type="evidence" value="ECO:0007669"/>
    <property type="project" value="UniProtKB-SubCell"/>
</dbReference>
<dbReference type="GO" id="GO:0003864">
    <property type="term" value="F:3-methyl-2-oxobutanoate hydroxymethyltransferase activity"/>
    <property type="evidence" value="ECO:0007669"/>
    <property type="project" value="UniProtKB-UniRule"/>
</dbReference>
<dbReference type="GO" id="GO:0000287">
    <property type="term" value="F:magnesium ion binding"/>
    <property type="evidence" value="ECO:0007669"/>
    <property type="project" value="TreeGrafter"/>
</dbReference>
<dbReference type="GO" id="GO:0015940">
    <property type="term" value="P:pantothenate biosynthetic process"/>
    <property type="evidence" value="ECO:0007669"/>
    <property type="project" value="UniProtKB-UniRule"/>
</dbReference>
<dbReference type="CDD" id="cd06557">
    <property type="entry name" value="KPHMT-like"/>
    <property type="match status" value="1"/>
</dbReference>
<dbReference type="FunFam" id="3.20.20.60:FF:000017">
    <property type="entry name" value="3-methyl-2-oxobutanoate hydroxymethyltransferase"/>
    <property type="match status" value="1"/>
</dbReference>
<dbReference type="Gene3D" id="3.20.20.60">
    <property type="entry name" value="Phosphoenolpyruvate-binding domains"/>
    <property type="match status" value="1"/>
</dbReference>
<dbReference type="HAMAP" id="MF_00156">
    <property type="entry name" value="PanB"/>
    <property type="match status" value="1"/>
</dbReference>
<dbReference type="InterPro" id="IPR003700">
    <property type="entry name" value="Pantoate_hydroxy_MeTrfase"/>
</dbReference>
<dbReference type="InterPro" id="IPR015813">
    <property type="entry name" value="Pyrv/PenolPyrv_kinase-like_dom"/>
</dbReference>
<dbReference type="InterPro" id="IPR040442">
    <property type="entry name" value="Pyrv_kinase-like_dom_sf"/>
</dbReference>
<dbReference type="NCBIfam" id="TIGR00222">
    <property type="entry name" value="panB"/>
    <property type="match status" value="1"/>
</dbReference>
<dbReference type="NCBIfam" id="NF001452">
    <property type="entry name" value="PRK00311.1"/>
    <property type="match status" value="1"/>
</dbReference>
<dbReference type="PANTHER" id="PTHR20881">
    <property type="entry name" value="3-METHYL-2-OXOBUTANOATE HYDROXYMETHYLTRANSFERASE"/>
    <property type="match status" value="1"/>
</dbReference>
<dbReference type="PANTHER" id="PTHR20881:SF0">
    <property type="entry name" value="3-METHYL-2-OXOBUTANOATE HYDROXYMETHYLTRANSFERASE"/>
    <property type="match status" value="1"/>
</dbReference>
<dbReference type="Pfam" id="PF02548">
    <property type="entry name" value="Pantoate_transf"/>
    <property type="match status" value="1"/>
</dbReference>
<dbReference type="PIRSF" id="PIRSF000388">
    <property type="entry name" value="Pantoate_hydroxy_MeTrfase"/>
    <property type="match status" value="1"/>
</dbReference>
<dbReference type="SUPFAM" id="SSF51621">
    <property type="entry name" value="Phosphoenolpyruvate/pyruvate domain"/>
    <property type="match status" value="1"/>
</dbReference>
<comment type="function">
    <text evidence="1">Catalyzes the reversible reaction in which hydroxymethyl group from 5,10-methylenetetrahydrofolate is transferred onto alpha-ketoisovalerate to form ketopantoate.</text>
</comment>
<comment type="catalytic activity">
    <reaction evidence="1">
        <text>3-methyl-2-oxobutanoate + (6R)-5,10-methylene-5,6,7,8-tetrahydrofolate + H2O = 2-dehydropantoate + (6S)-5,6,7,8-tetrahydrofolate</text>
        <dbReference type="Rhea" id="RHEA:11824"/>
        <dbReference type="ChEBI" id="CHEBI:11561"/>
        <dbReference type="ChEBI" id="CHEBI:11851"/>
        <dbReference type="ChEBI" id="CHEBI:15377"/>
        <dbReference type="ChEBI" id="CHEBI:15636"/>
        <dbReference type="ChEBI" id="CHEBI:57453"/>
        <dbReference type="EC" id="2.1.2.11"/>
    </reaction>
</comment>
<comment type="cofactor">
    <cofactor evidence="1">
        <name>Mg(2+)</name>
        <dbReference type="ChEBI" id="CHEBI:18420"/>
    </cofactor>
    <text evidence="1">Binds 1 Mg(2+) ion per subunit.</text>
</comment>
<comment type="pathway">
    <text evidence="1">Cofactor biosynthesis; (R)-pantothenate biosynthesis; (R)-pantoate from 3-methyl-2-oxobutanoate: step 1/2.</text>
</comment>
<comment type="subunit">
    <text evidence="1">Homodecamer; pentamer of dimers.</text>
</comment>
<comment type="subcellular location">
    <subcellularLocation>
        <location evidence="1">Cytoplasm</location>
    </subcellularLocation>
</comment>
<comment type="similarity">
    <text evidence="1">Belongs to the PanB family.</text>
</comment>
<sequence length="277" mass="30343">MPNGSANKLPHVTTRRMLDMKERGEKIAVLTAYDYTMARILDRSGVDAILVGDSASNVFSGHNTTLPITVDEMIYHAKAVVRGVQAETSRAMVIVDMPFMSYQLSPEDAVRNAGKIMKEHECDAVKMEGGKVIAEAVKRITDIGIPVMGHLGLMPQSIYKYGSYKVRAKEGDEAEQLMEDARILEESGAFAIVLEKIPSKLAGEVSRSLTIPTIGIGAGPECDGQVLVINDMLGLNTEFHPRFVRRYADLSSVIEKAVQSYVADVRANSFPSEDESY</sequence>
<protein>
    <recommendedName>
        <fullName evidence="1">3-methyl-2-oxobutanoate hydroxymethyltransferase</fullName>
        <ecNumber evidence="1">2.1.2.11</ecNumber>
    </recommendedName>
    <alternativeName>
        <fullName evidence="1">Ketopantoate hydroxymethyltransferase</fullName>
        <shortName evidence="1">KPHMT</shortName>
    </alternativeName>
</protein>
<accession>B3QMS8</accession>
<name>PANB_CHLP8</name>
<organism>
    <name type="scientific">Chlorobaculum parvum (strain DSM 263 / NCIMB 8327)</name>
    <name type="common">Chlorobium vibrioforme subsp. thiosulfatophilum</name>
    <dbReference type="NCBI Taxonomy" id="517417"/>
    <lineage>
        <taxon>Bacteria</taxon>
        <taxon>Pseudomonadati</taxon>
        <taxon>Chlorobiota</taxon>
        <taxon>Chlorobiia</taxon>
        <taxon>Chlorobiales</taxon>
        <taxon>Chlorobiaceae</taxon>
        <taxon>Chlorobaculum</taxon>
    </lineage>
</organism>
<reference key="1">
    <citation type="submission" date="2008-06" db="EMBL/GenBank/DDBJ databases">
        <title>Complete sequence of Chlorobaculum parvum NCIB 8327.</title>
        <authorList>
            <consortium name="US DOE Joint Genome Institute"/>
            <person name="Lucas S."/>
            <person name="Copeland A."/>
            <person name="Lapidus A."/>
            <person name="Glavina del Rio T."/>
            <person name="Dalin E."/>
            <person name="Tice H."/>
            <person name="Bruce D."/>
            <person name="Goodwin L."/>
            <person name="Pitluck S."/>
            <person name="Schmutz J."/>
            <person name="Larimer F."/>
            <person name="Land M."/>
            <person name="Hauser L."/>
            <person name="Kyrpides N."/>
            <person name="Mikhailova N."/>
            <person name="Zhao F."/>
            <person name="Li T."/>
            <person name="Liu Z."/>
            <person name="Overmann J."/>
            <person name="Bryant D.A."/>
            <person name="Richardson P."/>
        </authorList>
    </citation>
    <scope>NUCLEOTIDE SEQUENCE [LARGE SCALE GENOMIC DNA]</scope>
    <source>
        <strain>DSM 263 / NCIMB 8327</strain>
    </source>
</reference>
<keyword id="KW-0963">Cytoplasm</keyword>
<keyword id="KW-0460">Magnesium</keyword>
<keyword id="KW-0479">Metal-binding</keyword>
<keyword id="KW-0566">Pantothenate biosynthesis</keyword>
<keyword id="KW-0808">Transferase</keyword>
<feature type="chain" id="PRO_1000096950" description="3-methyl-2-oxobutanoate hydroxymethyltransferase">
    <location>
        <begin position="1"/>
        <end position="277"/>
    </location>
</feature>
<feature type="active site" description="Proton acceptor" evidence="1">
    <location>
        <position position="195"/>
    </location>
</feature>
<feature type="binding site" evidence="1">
    <location>
        <begin position="53"/>
        <end position="54"/>
    </location>
    <ligand>
        <name>3-methyl-2-oxobutanoate</name>
        <dbReference type="ChEBI" id="CHEBI:11851"/>
    </ligand>
</feature>
<feature type="binding site" evidence="1">
    <location>
        <position position="53"/>
    </location>
    <ligand>
        <name>Mg(2+)</name>
        <dbReference type="ChEBI" id="CHEBI:18420"/>
    </ligand>
</feature>
<feature type="binding site" evidence="1">
    <location>
        <position position="96"/>
    </location>
    <ligand>
        <name>3-methyl-2-oxobutanoate</name>
        <dbReference type="ChEBI" id="CHEBI:11851"/>
    </ligand>
</feature>
<feature type="binding site" evidence="1">
    <location>
        <position position="96"/>
    </location>
    <ligand>
        <name>Mg(2+)</name>
        <dbReference type="ChEBI" id="CHEBI:18420"/>
    </ligand>
</feature>
<feature type="binding site" evidence="1">
    <location>
        <position position="126"/>
    </location>
    <ligand>
        <name>3-methyl-2-oxobutanoate</name>
        <dbReference type="ChEBI" id="CHEBI:11851"/>
    </ligand>
</feature>
<feature type="binding site" evidence="1">
    <location>
        <position position="128"/>
    </location>
    <ligand>
        <name>Mg(2+)</name>
        <dbReference type="ChEBI" id="CHEBI:18420"/>
    </ligand>
</feature>
<proteinExistence type="inferred from homology"/>